<accession>Q08645</accession>
<accession>D6W2U3</accession>
<feature type="chain" id="PRO_0000168312" description="Folylpolyglutamate synthase">
    <location>
        <begin position="1"/>
        <end position="548"/>
    </location>
</feature>
<feature type="binding site" evidence="2">
    <location>
        <begin position="130"/>
        <end position="133"/>
    </location>
    <ligand>
        <name>ATP</name>
        <dbReference type="ChEBI" id="CHEBI:30616"/>
    </ligand>
</feature>
<feature type="binding site" evidence="2">
    <location>
        <position position="157"/>
    </location>
    <ligand>
        <name>Mg(2+)</name>
        <dbReference type="ChEBI" id="CHEBI:18420"/>
        <label>1</label>
    </ligand>
</feature>
<feature type="binding site" evidence="2">
    <location>
        <position position="234"/>
    </location>
    <ligand>
        <name>Mg(2+)</name>
        <dbReference type="ChEBI" id="CHEBI:18420"/>
        <label>1</label>
    </ligand>
</feature>
<feature type="binding site" evidence="2">
    <location>
        <position position="262"/>
    </location>
    <ligand>
        <name>Mg(2+)</name>
        <dbReference type="ChEBI" id="CHEBI:18420"/>
        <label>2</label>
    </ligand>
</feature>
<feature type="binding site" evidence="2">
    <location>
        <position position="382"/>
    </location>
    <ligand>
        <name>ATP</name>
        <dbReference type="ChEBI" id="CHEBI:30616"/>
    </ligand>
</feature>
<feature type="binding site" evidence="2">
    <location>
        <position position="396"/>
    </location>
    <ligand>
        <name>ATP</name>
        <dbReference type="ChEBI" id="CHEBI:30616"/>
    </ligand>
</feature>
<gene>
    <name type="primary">MET7</name>
    <name type="synonym">MET23</name>
    <name type="ordered locus">YOR241W</name>
    <name type="ORF">O5248</name>
</gene>
<name>FOLE_YEAST</name>
<comment type="function">
    <text evidence="4 6">Catalyzes conversion of folates to polyglutamate derivatives allowing concentration of folate compounds in the cell and the intracellular retention of these cofactors, which are important substrates for most of the folate-dependent enzymes that are involved in one-carbon transfer reactions involved in purine, pyrimidine and amino acid synthesis. Required for methionine synthesis and maintenance of intact mitochondrial DNA. Involved in telomere maintenance.</text>
</comment>
<comment type="catalytic activity">
    <reaction evidence="3 4">
        <text>(6S)-5,6,7,8-tetrahydrofolyl-(gamma-L-Glu)(n) + L-glutamate + ATP = (6S)-5,6,7,8-tetrahydrofolyl-(gamma-L-Glu)(n+1) + ADP + phosphate + H(+)</text>
        <dbReference type="Rhea" id="RHEA:10580"/>
        <dbReference type="Rhea" id="RHEA-COMP:14738"/>
        <dbReference type="Rhea" id="RHEA-COMP:14740"/>
        <dbReference type="ChEBI" id="CHEBI:15378"/>
        <dbReference type="ChEBI" id="CHEBI:29985"/>
        <dbReference type="ChEBI" id="CHEBI:30616"/>
        <dbReference type="ChEBI" id="CHEBI:43474"/>
        <dbReference type="ChEBI" id="CHEBI:141005"/>
        <dbReference type="ChEBI" id="CHEBI:456216"/>
        <dbReference type="EC" id="6.3.2.17"/>
    </reaction>
</comment>
<comment type="cofactor">
    <cofactor evidence="1">
        <name>a monovalent cation</name>
        <dbReference type="ChEBI" id="CHEBI:60242"/>
    </cofactor>
    <text evidence="1">A monovalent cation.</text>
</comment>
<comment type="pathway">
    <text>Cofactor biosynthesis; tetrahydrofolylpolyglutamate biosynthesis.</text>
</comment>
<comment type="subcellular location">
    <subcellularLocation>
        <location evidence="3">Mitochondrion</location>
    </subcellularLocation>
    <subcellularLocation>
        <location evidence="1">Mitochondrion inner membrane</location>
    </subcellularLocation>
    <subcellularLocation>
        <location evidence="1">Mitochondrion matrix</location>
    </subcellularLocation>
    <subcellularLocation>
        <location evidence="3">Cytoplasm</location>
    </subcellularLocation>
</comment>
<comment type="disruption phenotype">
    <text evidence="3 4">Methionine auxotroph. Undetectable levels of folylpolyglutamate synthase activity. Increased rate of loss of mitochondrial DNA. Respiration-deficient. MET7 and FOL3 double mutant cells are not viable even in the presence of methionine and folinic acid. MET7, FOL3 and TUP1 triple disruption mutant is able to germinate on YPGA medium containing thymidylate and to grow although poorly on synthetic medium containing methionine, adenine and thymidylate. Adenine and thymidine auxotroph when grown in the presence of sulfanilamide. Becomes petite under normal growth conditions but can be maintained with a grande phenotype if the strain is TUP1 and all media are supplemented with dTMP. MET7 and GLY1 double mutant is auxotrophic for glycine when grown on glucose but prototrophic when grown on glycerol. MET7 and SER1 double mutant cannot use glycine to suppress serine auxotrophy. MET7 and SHM2 double mutant is nonviable.</text>
</comment>
<comment type="miscellaneous">
    <text evidence="5">Present with 7080 molecules/cell in log phase SD medium.</text>
</comment>
<comment type="similarity">
    <text evidence="7">Belongs to the folylpolyglutamate synthase family.</text>
</comment>
<organism>
    <name type="scientific">Saccharomyces cerevisiae (strain ATCC 204508 / S288c)</name>
    <name type="common">Baker's yeast</name>
    <dbReference type="NCBI Taxonomy" id="559292"/>
    <lineage>
        <taxon>Eukaryota</taxon>
        <taxon>Fungi</taxon>
        <taxon>Dikarya</taxon>
        <taxon>Ascomycota</taxon>
        <taxon>Saccharomycotina</taxon>
        <taxon>Saccharomycetes</taxon>
        <taxon>Saccharomycetales</taxon>
        <taxon>Saccharomycetaceae</taxon>
        <taxon>Saccharomyces</taxon>
    </lineage>
</organism>
<evidence type="ECO:0000250" key="1"/>
<evidence type="ECO:0000250" key="2">
    <source>
        <dbReference type="UniProtKB" id="P08192"/>
    </source>
</evidence>
<evidence type="ECO:0000269" key="3">
    <source>
    </source>
</evidence>
<evidence type="ECO:0000269" key="4">
    <source>
    </source>
</evidence>
<evidence type="ECO:0000269" key="5">
    <source>
    </source>
</evidence>
<evidence type="ECO:0000269" key="6">
    <source>
    </source>
</evidence>
<evidence type="ECO:0000305" key="7"/>
<dbReference type="EC" id="6.3.2.17"/>
<dbReference type="EMBL" id="Z75149">
    <property type="protein sequence ID" value="CAA99462.1"/>
    <property type="molecule type" value="Genomic_DNA"/>
</dbReference>
<dbReference type="EMBL" id="AY692818">
    <property type="protein sequence ID" value="AAT92837.1"/>
    <property type="molecule type" value="Genomic_DNA"/>
</dbReference>
<dbReference type="EMBL" id="BK006948">
    <property type="protein sequence ID" value="DAA11009.1"/>
    <property type="molecule type" value="Genomic_DNA"/>
</dbReference>
<dbReference type="PIR" id="S67134">
    <property type="entry name" value="S67134"/>
</dbReference>
<dbReference type="RefSeq" id="NP_014884.1">
    <property type="nucleotide sequence ID" value="NM_001183660.1"/>
</dbReference>
<dbReference type="SMR" id="Q08645"/>
<dbReference type="BioGRID" id="34632">
    <property type="interactions" value="260"/>
</dbReference>
<dbReference type="DIP" id="DIP-4986N"/>
<dbReference type="FunCoup" id="Q08645">
    <property type="interactions" value="786"/>
</dbReference>
<dbReference type="IntAct" id="Q08645">
    <property type="interactions" value="11"/>
</dbReference>
<dbReference type="STRING" id="4932.YOR241W"/>
<dbReference type="iPTMnet" id="Q08645"/>
<dbReference type="PaxDb" id="4932-YOR241W"/>
<dbReference type="PeptideAtlas" id="Q08645"/>
<dbReference type="TopDownProteomics" id="Q08645"/>
<dbReference type="EnsemblFungi" id="YOR241W_mRNA">
    <property type="protein sequence ID" value="YOR241W"/>
    <property type="gene ID" value="YOR241W"/>
</dbReference>
<dbReference type="GeneID" id="854415"/>
<dbReference type="KEGG" id="sce:YOR241W"/>
<dbReference type="AGR" id="SGD:S000005767"/>
<dbReference type="SGD" id="S000005767">
    <property type="gene designation" value="MET7"/>
</dbReference>
<dbReference type="VEuPathDB" id="FungiDB:YOR241W"/>
<dbReference type="eggNOG" id="KOG2525">
    <property type="taxonomic scope" value="Eukaryota"/>
</dbReference>
<dbReference type="GeneTree" id="ENSGT00390000016526"/>
<dbReference type="HOGENOM" id="CLU_015869_0_1_1"/>
<dbReference type="InParanoid" id="Q08645"/>
<dbReference type="OMA" id="ESLDCCM"/>
<dbReference type="OrthoDB" id="5212574at2759"/>
<dbReference type="BioCyc" id="YEAST:YOR241W-MONOMER"/>
<dbReference type="Reactome" id="R-SCE-196757">
    <property type="pathway name" value="Metabolism of folate and pterines"/>
</dbReference>
<dbReference type="UniPathway" id="UPA00850"/>
<dbReference type="BioGRID-ORCS" id="854415">
    <property type="hits" value="0 hits in 10 CRISPR screens"/>
</dbReference>
<dbReference type="PRO" id="PR:Q08645"/>
<dbReference type="Proteomes" id="UP000002311">
    <property type="component" value="Chromosome XV"/>
</dbReference>
<dbReference type="RNAct" id="Q08645">
    <property type="molecule type" value="protein"/>
</dbReference>
<dbReference type="GO" id="GO:0005737">
    <property type="term" value="C:cytoplasm"/>
    <property type="evidence" value="ECO:0000314"/>
    <property type="project" value="SGD"/>
</dbReference>
<dbReference type="GO" id="GO:0005829">
    <property type="term" value="C:cytosol"/>
    <property type="evidence" value="ECO:0000318"/>
    <property type="project" value="GO_Central"/>
</dbReference>
<dbReference type="GO" id="GO:0005783">
    <property type="term" value="C:endoplasmic reticulum"/>
    <property type="evidence" value="ECO:0007005"/>
    <property type="project" value="SGD"/>
</dbReference>
<dbReference type="GO" id="GO:0005743">
    <property type="term" value="C:mitochondrial inner membrane"/>
    <property type="evidence" value="ECO:0007669"/>
    <property type="project" value="UniProtKB-SubCell"/>
</dbReference>
<dbReference type="GO" id="GO:0005759">
    <property type="term" value="C:mitochondrial matrix"/>
    <property type="evidence" value="ECO:0007669"/>
    <property type="project" value="UniProtKB-SubCell"/>
</dbReference>
<dbReference type="GO" id="GO:0005739">
    <property type="term" value="C:mitochondrion"/>
    <property type="evidence" value="ECO:0000314"/>
    <property type="project" value="SGD"/>
</dbReference>
<dbReference type="GO" id="GO:0005524">
    <property type="term" value="F:ATP binding"/>
    <property type="evidence" value="ECO:0007669"/>
    <property type="project" value="UniProtKB-KW"/>
</dbReference>
<dbReference type="GO" id="GO:0046872">
    <property type="term" value="F:metal ion binding"/>
    <property type="evidence" value="ECO:0007669"/>
    <property type="project" value="UniProtKB-KW"/>
</dbReference>
<dbReference type="GO" id="GO:0004326">
    <property type="term" value="F:tetrahydrofolylpolyglutamate synthase activity"/>
    <property type="evidence" value="ECO:0000314"/>
    <property type="project" value="SGD"/>
</dbReference>
<dbReference type="GO" id="GO:0006730">
    <property type="term" value="P:one-carbon metabolic process"/>
    <property type="evidence" value="ECO:0000315"/>
    <property type="project" value="SGD"/>
</dbReference>
<dbReference type="GO" id="GO:0046901">
    <property type="term" value="P:tetrahydrofolylpolyglutamate biosynthetic process"/>
    <property type="evidence" value="ECO:0000318"/>
    <property type="project" value="GO_Central"/>
</dbReference>
<dbReference type="FunFam" id="3.40.1190.10:FF:000009">
    <property type="entry name" value="Folylpolyglutamate synthase"/>
    <property type="match status" value="1"/>
</dbReference>
<dbReference type="FunFam" id="3.90.190.20:FF:000009">
    <property type="entry name" value="Folylpolyglutamate synthase"/>
    <property type="match status" value="1"/>
</dbReference>
<dbReference type="Gene3D" id="3.90.190.20">
    <property type="entry name" value="Mur ligase, C-terminal domain"/>
    <property type="match status" value="1"/>
</dbReference>
<dbReference type="Gene3D" id="3.40.1190.10">
    <property type="entry name" value="Mur-like, catalytic domain"/>
    <property type="match status" value="1"/>
</dbReference>
<dbReference type="InterPro" id="IPR001645">
    <property type="entry name" value="Folylpolyglutamate_synth"/>
</dbReference>
<dbReference type="InterPro" id="IPR018109">
    <property type="entry name" value="Folylpolyglutamate_synth_CS"/>
</dbReference>
<dbReference type="InterPro" id="IPR023600">
    <property type="entry name" value="Folylpolyglutamate_synth_euk"/>
</dbReference>
<dbReference type="InterPro" id="IPR036565">
    <property type="entry name" value="Mur-like_cat_sf"/>
</dbReference>
<dbReference type="InterPro" id="IPR036615">
    <property type="entry name" value="Mur_ligase_C_dom_sf"/>
</dbReference>
<dbReference type="NCBIfam" id="TIGR01499">
    <property type="entry name" value="folC"/>
    <property type="match status" value="1"/>
</dbReference>
<dbReference type="PANTHER" id="PTHR11136:SF5">
    <property type="entry name" value="FOLYLPOLYGLUTAMATE SYNTHASE, MITOCHONDRIAL"/>
    <property type="match status" value="1"/>
</dbReference>
<dbReference type="PANTHER" id="PTHR11136">
    <property type="entry name" value="FOLYLPOLYGLUTAMATE SYNTHASE-RELATED"/>
    <property type="match status" value="1"/>
</dbReference>
<dbReference type="PIRSF" id="PIRSF038895">
    <property type="entry name" value="FPGS"/>
    <property type="match status" value="1"/>
</dbReference>
<dbReference type="SUPFAM" id="SSF53623">
    <property type="entry name" value="MurD-like peptide ligases, catalytic domain"/>
    <property type="match status" value="1"/>
</dbReference>
<dbReference type="SUPFAM" id="SSF53244">
    <property type="entry name" value="MurD-like peptide ligases, peptide-binding domain"/>
    <property type="match status" value="1"/>
</dbReference>
<dbReference type="PROSITE" id="PS01011">
    <property type="entry name" value="FOLYLPOLYGLU_SYNT_1"/>
    <property type="match status" value="1"/>
</dbReference>
<dbReference type="PROSITE" id="PS01012">
    <property type="entry name" value="FOLYLPOLYGLU_SYNT_2"/>
    <property type="match status" value="1"/>
</dbReference>
<keyword id="KW-0067">ATP-binding</keyword>
<keyword id="KW-0963">Cytoplasm</keyword>
<keyword id="KW-0436">Ligase</keyword>
<keyword id="KW-0460">Magnesium</keyword>
<keyword id="KW-0472">Membrane</keyword>
<keyword id="KW-0479">Metal-binding</keyword>
<keyword id="KW-0496">Mitochondrion</keyword>
<keyword id="KW-0999">Mitochondrion inner membrane</keyword>
<keyword id="KW-0547">Nucleotide-binding</keyword>
<keyword id="KW-0554">One-carbon metabolism</keyword>
<keyword id="KW-1185">Reference proteome</keyword>
<proteinExistence type="evidence at protein level"/>
<reference key="1">
    <citation type="journal article" date="1996" name="Yeast">
        <title>Sequence and analysis of a 26.9 kb fragment from chromosome XV of the yeast Saccharomyces cerevisiae.</title>
        <authorList>
            <person name="Boyer J."/>
            <person name="Michaux G."/>
            <person name="Fairhead C."/>
            <person name="Gaillon L."/>
            <person name="Dujon B."/>
        </authorList>
    </citation>
    <scope>NUCLEOTIDE SEQUENCE [GENOMIC DNA]</scope>
    <source>
        <strain>ATCC 96604 / S288c / FY1679</strain>
    </source>
</reference>
<reference key="2">
    <citation type="journal article" date="1997" name="Nature">
        <title>The nucleotide sequence of Saccharomyces cerevisiae chromosome XV.</title>
        <authorList>
            <person name="Dujon B."/>
            <person name="Albermann K."/>
            <person name="Aldea M."/>
            <person name="Alexandraki D."/>
            <person name="Ansorge W."/>
            <person name="Arino J."/>
            <person name="Benes V."/>
            <person name="Bohn C."/>
            <person name="Bolotin-Fukuhara M."/>
            <person name="Bordonne R."/>
            <person name="Boyer J."/>
            <person name="Camasses A."/>
            <person name="Casamayor A."/>
            <person name="Casas C."/>
            <person name="Cheret G."/>
            <person name="Cziepluch C."/>
            <person name="Daignan-Fornier B."/>
            <person name="Dang V.-D."/>
            <person name="de Haan M."/>
            <person name="Delius H."/>
            <person name="Durand P."/>
            <person name="Fairhead C."/>
            <person name="Feldmann H."/>
            <person name="Gaillon L."/>
            <person name="Galisson F."/>
            <person name="Gamo F.-J."/>
            <person name="Gancedo C."/>
            <person name="Goffeau A."/>
            <person name="Goulding S.E."/>
            <person name="Grivell L.A."/>
            <person name="Habbig B."/>
            <person name="Hand N.J."/>
            <person name="Hani J."/>
            <person name="Hattenhorst U."/>
            <person name="Hebling U."/>
            <person name="Hernando Y."/>
            <person name="Herrero E."/>
            <person name="Heumann K."/>
            <person name="Hiesel R."/>
            <person name="Hilger F."/>
            <person name="Hofmann B."/>
            <person name="Hollenberg C.P."/>
            <person name="Hughes B."/>
            <person name="Jauniaux J.-C."/>
            <person name="Kalogeropoulos A."/>
            <person name="Katsoulou C."/>
            <person name="Kordes E."/>
            <person name="Lafuente M.J."/>
            <person name="Landt O."/>
            <person name="Louis E.J."/>
            <person name="Maarse A.C."/>
            <person name="Madania A."/>
            <person name="Mannhaupt G."/>
            <person name="Marck C."/>
            <person name="Martin R.P."/>
            <person name="Mewes H.-W."/>
            <person name="Michaux G."/>
            <person name="Paces V."/>
            <person name="Parle-McDermott A.G."/>
            <person name="Pearson B.M."/>
            <person name="Perrin A."/>
            <person name="Pettersson B."/>
            <person name="Poch O."/>
            <person name="Pohl T.M."/>
            <person name="Poirey R."/>
            <person name="Portetelle D."/>
            <person name="Pujol A."/>
            <person name="Purnelle B."/>
            <person name="Ramezani Rad M."/>
            <person name="Rechmann S."/>
            <person name="Schwager C."/>
            <person name="Schweizer M."/>
            <person name="Sor F."/>
            <person name="Sterky F."/>
            <person name="Tarassov I.A."/>
            <person name="Teodoru C."/>
            <person name="Tettelin H."/>
            <person name="Thierry A."/>
            <person name="Tobiasch E."/>
            <person name="Tzermia M."/>
            <person name="Uhlen M."/>
            <person name="Unseld M."/>
            <person name="Valens M."/>
            <person name="Vandenbol M."/>
            <person name="Vetter I."/>
            <person name="Vlcek C."/>
            <person name="Voet M."/>
            <person name="Volckaert G."/>
            <person name="Voss H."/>
            <person name="Wambutt R."/>
            <person name="Wedler H."/>
            <person name="Wiemann S."/>
            <person name="Winsor B."/>
            <person name="Wolfe K.H."/>
            <person name="Zollner A."/>
            <person name="Zumstein E."/>
            <person name="Kleine K."/>
        </authorList>
    </citation>
    <scope>NUCLEOTIDE SEQUENCE [LARGE SCALE GENOMIC DNA]</scope>
    <source>
        <strain>ATCC 204508 / S288c</strain>
    </source>
</reference>
<reference key="3">
    <citation type="journal article" date="2014" name="G3 (Bethesda)">
        <title>The reference genome sequence of Saccharomyces cerevisiae: Then and now.</title>
        <authorList>
            <person name="Engel S.R."/>
            <person name="Dietrich F.S."/>
            <person name="Fisk D.G."/>
            <person name="Binkley G."/>
            <person name="Balakrishnan R."/>
            <person name="Costanzo M.C."/>
            <person name="Dwight S.S."/>
            <person name="Hitz B.C."/>
            <person name="Karra K."/>
            <person name="Nash R.S."/>
            <person name="Weng S."/>
            <person name="Wong E.D."/>
            <person name="Lloyd P."/>
            <person name="Skrzypek M.S."/>
            <person name="Miyasato S.R."/>
            <person name="Simison M."/>
            <person name="Cherry J.M."/>
        </authorList>
    </citation>
    <scope>GENOME REANNOTATION</scope>
    <source>
        <strain>ATCC 204508 / S288c</strain>
    </source>
</reference>
<reference key="4">
    <citation type="journal article" date="2007" name="Genome Res.">
        <title>Approaching a complete repository of sequence-verified protein-encoding clones for Saccharomyces cerevisiae.</title>
        <authorList>
            <person name="Hu Y."/>
            <person name="Rolfs A."/>
            <person name="Bhullar B."/>
            <person name="Murthy T.V.S."/>
            <person name="Zhu C."/>
            <person name="Berger M.F."/>
            <person name="Camargo A.A."/>
            <person name="Kelley F."/>
            <person name="McCarron S."/>
            <person name="Jepson D."/>
            <person name="Richardson A."/>
            <person name="Raphael J."/>
            <person name="Moreira D."/>
            <person name="Taycher E."/>
            <person name="Zuo D."/>
            <person name="Mohr S."/>
            <person name="Kane M.F."/>
            <person name="Williamson J."/>
            <person name="Simpson A.J.G."/>
            <person name="Bulyk M.L."/>
            <person name="Harlow E."/>
            <person name="Marsischky G."/>
            <person name="Kolodner R.D."/>
            <person name="LaBaer J."/>
        </authorList>
    </citation>
    <scope>NUCLEOTIDE SEQUENCE [GENOMIC DNA]</scope>
    <source>
        <strain>ATCC 204508 / S288c</strain>
    </source>
</reference>
<reference key="5">
    <citation type="journal article" date="2000" name="J. Biol. Chem.">
        <title>Polyglutamylation of folate coenzymes is necessary for methionine biosynthesis and maintenance of intact mitochondrial genome in Saccharomyces cerevisiae.</title>
        <authorList>
            <person name="Cherest H."/>
            <person name="Thomas D."/>
            <person name="Surdin-Kerjan Y."/>
        </authorList>
    </citation>
    <scope>FUNCTION</scope>
    <scope>CATALYTIC ACTIVITY</scope>
    <scope>DISRUPTION PHENOTYPE</scope>
</reference>
<reference key="6">
    <citation type="journal article" date="2000" name="Arch. Biochem. Biophys.">
        <title>Disruption of cytoplasmic and mitochondrial folylpolyglutamate synthetase activity in Saccharomyces cerevisiae.</title>
        <authorList>
            <person name="DeSouza L."/>
            <person name="Shen Y."/>
            <person name="Bognar A.L."/>
        </authorList>
    </citation>
    <scope>CATALYTIC ACTIVITY</scope>
    <scope>SUBCELLULAR LOCATION</scope>
    <scope>DISRUPTION PHENOTYPE</scope>
</reference>
<reference key="7">
    <citation type="journal article" date="2003" name="Nature">
        <title>Global analysis of protein expression in yeast.</title>
        <authorList>
            <person name="Ghaemmaghami S."/>
            <person name="Huh W.-K."/>
            <person name="Bower K."/>
            <person name="Howson R.W."/>
            <person name="Belle A."/>
            <person name="Dephoure N."/>
            <person name="O'Shea E.K."/>
            <person name="Weissman J.S."/>
        </authorList>
    </citation>
    <scope>LEVEL OF PROTEIN EXPRESSION [LARGE SCALE ANALYSIS]</scope>
</reference>
<reference key="8">
    <citation type="journal article" date="2004" name="Proc. Natl. Acad. Sci. U.S.A.">
        <title>A genome-wide screen for Saccharomyces cerevisiae deletion mutants that affect telomere length.</title>
        <authorList>
            <person name="Askree S.H."/>
            <person name="Yehuda T."/>
            <person name="Smolikov S."/>
            <person name="Gurevich R."/>
            <person name="Hawk J."/>
            <person name="Coker C."/>
            <person name="Krauskopf A."/>
            <person name="Kupiec M."/>
            <person name="McEachern M.J."/>
        </authorList>
    </citation>
    <scope>FUNCTION</scope>
</reference>
<protein>
    <recommendedName>
        <fullName>Folylpolyglutamate synthase</fullName>
        <ecNumber>6.3.2.17</ecNumber>
    </recommendedName>
    <alternativeName>
        <fullName>Folylpoly-gamma-glutamate synthetase</fullName>
        <shortName>FPGS</shortName>
    </alternativeName>
    <alternativeName>
        <fullName>Tetrahydrofolylpolyglutamate synthase</fullName>
        <shortName>Tetrahydrofolate synthase</shortName>
    </alternativeName>
</protein>
<sequence>MHKGKKNYPNLITSFRMNLKKIILNHDRFSHPERWKTNALLRFTFVYIKFLFDLMIIKNPLRMVGKTYRDAVTALNSLQSNYANIMAIRQTGDRKNTMTLLEMHEWSRRIGYSASDFNKLNIVHITGTKGKGSTAAFTSSILGQYKEQLPRIGLYTSPHLKSVRERIRINGEPISEEKFAKYFFEVWDRLDSTTSSLDKFPHMIPGSKPGYFKFLTLLSFHTFIQEDCKSCVYEVGVGGELDSTNIIEKPIVCGVTLLGIDHTFMLGDTIEEIAWNKGGIFKSGAPAFTVEKQPPQGLTILKERAEERKTTLTEVPPFKQLENVKLGIAGEFQKSNASLAVMLASEILHTSNILEEKIKCSSNASIPEKFIIGLQNTKWEGRCQVLEKGKNVWYIDGAHTKDSMVAASTWFRDMVRLSKRKKILLFNQQSRDANALVNNLYSSVSPEITFDDVIFTTNVTWKSGSYSADLVSMNTSQEDVEKLKVQESLVKNWNKIDDNRAKTHVTASIEEANELIETLYDEPADIFVTGSLHLVGGLLVVFDRIDVK</sequence>